<accession>Q55BP8</accession>
<protein>
    <recommendedName>
        <fullName evidence="3">TLC domain-containing protein 4 C</fullName>
    </recommendedName>
    <alternativeName>
        <fullName>Transmembrane protein 56 homolog C</fullName>
    </alternativeName>
</protein>
<keyword id="KW-0472">Membrane</keyword>
<keyword id="KW-1185">Reference proteome</keyword>
<keyword id="KW-0812">Transmembrane</keyword>
<keyword id="KW-1133">Transmembrane helix</keyword>
<reference key="1">
    <citation type="journal article" date="2005" name="Nature">
        <title>The genome of the social amoeba Dictyostelium discoideum.</title>
        <authorList>
            <person name="Eichinger L."/>
            <person name="Pachebat J.A."/>
            <person name="Gloeckner G."/>
            <person name="Rajandream M.A."/>
            <person name="Sucgang R."/>
            <person name="Berriman M."/>
            <person name="Song J."/>
            <person name="Olsen R."/>
            <person name="Szafranski K."/>
            <person name="Xu Q."/>
            <person name="Tunggal B."/>
            <person name="Kummerfeld S."/>
            <person name="Madera M."/>
            <person name="Konfortov B.A."/>
            <person name="Rivero F."/>
            <person name="Bankier A.T."/>
            <person name="Lehmann R."/>
            <person name="Hamlin N."/>
            <person name="Davies R."/>
            <person name="Gaudet P."/>
            <person name="Fey P."/>
            <person name="Pilcher K."/>
            <person name="Chen G."/>
            <person name="Saunders D."/>
            <person name="Sodergren E.J."/>
            <person name="Davis P."/>
            <person name="Kerhornou A."/>
            <person name="Nie X."/>
            <person name="Hall N."/>
            <person name="Anjard C."/>
            <person name="Hemphill L."/>
            <person name="Bason N."/>
            <person name="Farbrother P."/>
            <person name="Desany B."/>
            <person name="Just E."/>
            <person name="Morio T."/>
            <person name="Rost R."/>
            <person name="Churcher C.M."/>
            <person name="Cooper J."/>
            <person name="Haydock S."/>
            <person name="van Driessche N."/>
            <person name="Cronin A."/>
            <person name="Goodhead I."/>
            <person name="Muzny D.M."/>
            <person name="Mourier T."/>
            <person name="Pain A."/>
            <person name="Lu M."/>
            <person name="Harper D."/>
            <person name="Lindsay R."/>
            <person name="Hauser H."/>
            <person name="James K.D."/>
            <person name="Quiles M."/>
            <person name="Madan Babu M."/>
            <person name="Saito T."/>
            <person name="Buchrieser C."/>
            <person name="Wardroper A."/>
            <person name="Felder M."/>
            <person name="Thangavelu M."/>
            <person name="Johnson D."/>
            <person name="Knights A."/>
            <person name="Loulseged H."/>
            <person name="Mungall K.L."/>
            <person name="Oliver K."/>
            <person name="Price C."/>
            <person name="Quail M.A."/>
            <person name="Urushihara H."/>
            <person name="Hernandez J."/>
            <person name="Rabbinowitsch E."/>
            <person name="Steffen D."/>
            <person name="Sanders M."/>
            <person name="Ma J."/>
            <person name="Kohara Y."/>
            <person name="Sharp S."/>
            <person name="Simmonds M.N."/>
            <person name="Spiegler S."/>
            <person name="Tivey A."/>
            <person name="Sugano S."/>
            <person name="White B."/>
            <person name="Walker D."/>
            <person name="Woodward J.R."/>
            <person name="Winckler T."/>
            <person name="Tanaka Y."/>
            <person name="Shaulsky G."/>
            <person name="Schleicher M."/>
            <person name="Weinstock G.M."/>
            <person name="Rosenthal A."/>
            <person name="Cox E.C."/>
            <person name="Chisholm R.L."/>
            <person name="Gibbs R.A."/>
            <person name="Loomis W.F."/>
            <person name="Platzer M."/>
            <person name="Kay R.R."/>
            <person name="Williams J.G."/>
            <person name="Dear P.H."/>
            <person name="Noegel A.A."/>
            <person name="Barrell B.G."/>
            <person name="Kuspa A."/>
        </authorList>
    </citation>
    <scope>NUCLEOTIDE SEQUENCE [LARGE SCALE GENOMIC DNA]</scope>
    <source>
        <strain>AX4</strain>
    </source>
</reference>
<comment type="subcellular location">
    <subcellularLocation>
        <location evidence="3">Membrane</location>
        <topology evidence="3">Multi-pass membrane protein</topology>
    </subcellularLocation>
</comment>
<comment type="similarity">
    <text evidence="3">Belongs to the TLCD4 family.</text>
</comment>
<dbReference type="EMBL" id="AAFI02000005">
    <property type="protein sequence ID" value="EAL72557.1"/>
    <property type="molecule type" value="Genomic_DNA"/>
</dbReference>
<dbReference type="RefSeq" id="XP_646783.1">
    <property type="nucleotide sequence ID" value="XM_641691.1"/>
</dbReference>
<dbReference type="SMR" id="Q55BP8"/>
<dbReference type="FunCoup" id="Q55BP8">
    <property type="interactions" value="68"/>
</dbReference>
<dbReference type="PaxDb" id="44689-DDB0238275"/>
<dbReference type="EnsemblProtists" id="EAL72557">
    <property type="protein sequence ID" value="EAL72557"/>
    <property type="gene ID" value="DDB_G0270414"/>
</dbReference>
<dbReference type="GeneID" id="8617756"/>
<dbReference type="KEGG" id="ddi:DDB_G0270414"/>
<dbReference type="dictyBase" id="DDB_G0270414">
    <property type="gene designation" value="tmem56C"/>
</dbReference>
<dbReference type="VEuPathDB" id="AmoebaDB:DDB_G0270414"/>
<dbReference type="eggNOG" id="KOG4561">
    <property type="taxonomic scope" value="Eukaryota"/>
</dbReference>
<dbReference type="HOGENOM" id="CLU_034597_0_0_1"/>
<dbReference type="InParanoid" id="Q55BP8"/>
<dbReference type="OMA" id="IESTICI"/>
<dbReference type="PhylomeDB" id="Q55BP8"/>
<dbReference type="PRO" id="PR:Q55BP8"/>
<dbReference type="Proteomes" id="UP000002195">
    <property type="component" value="Chromosome 1"/>
</dbReference>
<dbReference type="GO" id="GO:0005783">
    <property type="term" value="C:endoplasmic reticulum"/>
    <property type="evidence" value="ECO:0000318"/>
    <property type="project" value="GO_Central"/>
</dbReference>
<dbReference type="GO" id="GO:0016020">
    <property type="term" value="C:membrane"/>
    <property type="evidence" value="ECO:0007669"/>
    <property type="project" value="UniProtKB-SubCell"/>
</dbReference>
<dbReference type="GO" id="GO:0055088">
    <property type="term" value="P:lipid homeostasis"/>
    <property type="evidence" value="ECO:0000318"/>
    <property type="project" value="GO_Central"/>
</dbReference>
<dbReference type="InterPro" id="IPR006634">
    <property type="entry name" value="TLC-dom"/>
</dbReference>
<dbReference type="InterPro" id="IPR050846">
    <property type="entry name" value="TLCD"/>
</dbReference>
<dbReference type="PANTHER" id="PTHR13439">
    <property type="entry name" value="CT120 PROTEIN"/>
    <property type="match status" value="1"/>
</dbReference>
<dbReference type="PANTHER" id="PTHR13439:SF47">
    <property type="entry name" value="TLC DOMAIN-CONTAINING PROTEIN 4 C"/>
    <property type="match status" value="1"/>
</dbReference>
<dbReference type="Pfam" id="PF03798">
    <property type="entry name" value="TRAM_LAG1_CLN8"/>
    <property type="match status" value="1"/>
</dbReference>
<dbReference type="SMART" id="SM00724">
    <property type="entry name" value="TLC"/>
    <property type="match status" value="1"/>
</dbReference>
<dbReference type="PROSITE" id="PS50922">
    <property type="entry name" value="TLC"/>
    <property type="match status" value="1"/>
</dbReference>
<feature type="chain" id="PRO_0000330733" description="TLC domain-containing protein 4 C">
    <location>
        <begin position="1"/>
        <end position="272"/>
    </location>
</feature>
<feature type="transmembrane region" description="Helical" evidence="1">
    <location>
        <begin position="16"/>
        <end position="36"/>
    </location>
</feature>
<feature type="transmembrane region" description="Helical" evidence="1">
    <location>
        <begin position="71"/>
        <end position="91"/>
    </location>
</feature>
<feature type="transmembrane region" description="Helical" evidence="1">
    <location>
        <begin position="103"/>
        <end position="123"/>
    </location>
</feature>
<feature type="transmembrane region" description="Helical" evidence="1">
    <location>
        <begin position="128"/>
        <end position="148"/>
    </location>
</feature>
<feature type="transmembrane region" description="Helical" evidence="1">
    <location>
        <begin position="155"/>
        <end position="175"/>
    </location>
</feature>
<feature type="transmembrane region" description="Helical" evidence="1">
    <location>
        <begin position="196"/>
        <end position="216"/>
    </location>
</feature>
<feature type="transmembrane region" description="Helical" evidence="1">
    <location>
        <begin position="233"/>
        <end position="253"/>
    </location>
</feature>
<feature type="domain" description="TLC" evidence="2">
    <location>
        <begin position="61"/>
        <end position="261"/>
    </location>
</feature>
<evidence type="ECO:0000255" key="1"/>
<evidence type="ECO:0000255" key="2">
    <source>
        <dbReference type="PROSITE-ProRule" id="PRU00205"/>
    </source>
</evidence>
<evidence type="ECO:0000305" key="3"/>
<sequence>MSSINGIDNIKFDYEFSNSLYYRNSIFFSIIFFIIYKKSSYITENFFGELVKKAYTTLTEKKKLEWDQRVVSMIHAFLVLPFCIISAVESFKYGDIFYFQNDSLLMVLSISSGYFIWDLIICYKDPKLVGTPMIIHAIMGLSSNIYVALPHGRPCFVPIVAILLITEISTIPLNMKGFIQVVNSKSKYYNWSLGAFVITFLVSRCIIGLPFDIYLVYGCIQRWDVFPMDKSLVFITECGIQFFLNSYWSFLLIKKLYQTYLNPIPNHKKNED</sequence>
<proteinExistence type="inferred from homology"/>
<name>TLC4C_DICDI</name>
<organism>
    <name type="scientific">Dictyostelium discoideum</name>
    <name type="common">Social amoeba</name>
    <dbReference type="NCBI Taxonomy" id="44689"/>
    <lineage>
        <taxon>Eukaryota</taxon>
        <taxon>Amoebozoa</taxon>
        <taxon>Evosea</taxon>
        <taxon>Eumycetozoa</taxon>
        <taxon>Dictyostelia</taxon>
        <taxon>Dictyosteliales</taxon>
        <taxon>Dictyosteliaceae</taxon>
        <taxon>Dictyostelium</taxon>
    </lineage>
</organism>
<gene>
    <name type="primary">tlcd4c</name>
    <name type="synonym">tmem56c</name>
    <name type="ORF">DDB_G0270414</name>
</gene>